<evidence type="ECO:0000255" key="1">
    <source>
        <dbReference type="PROSITE-ProRule" id="PRU00794"/>
    </source>
</evidence>
<evidence type="ECO:0000305" key="2"/>
<protein>
    <recommendedName>
        <fullName>Uncharacterized 24.3 kDa protein</fullName>
    </recommendedName>
    <alternativeName>
        <fullName>ORF22</fullName>
    </alternativeName>
</protein>
<organismHost>
    <name type="scientific">Orgyia pseudotsugata</name>
    <name type="common">Douglas-fir tussock moth</name>
    <dbReference type="NCBI Taxonomy" id="33414"/>
</organismHost>
<reference key="1">
    <citation type="journal article" date="1997" name="Virology">
        <title>The sequence of the Orgyia pseudotsugata multinucleocapsid nuclear polyhedrosis virus genome.</title>
        <authorList>
            <person name="Ahrens C.H."/>
            <person name="Russell R.R."/>
            <person name="Funk C.J."/>
            <person name="Evans J."/>
            <person name="Harwood S."/>
            <person name="Rohrmann G.F."/>
        </authorList>
    </citation>
    <scope>NUCLEOTIDE SEQUENCE [LARGE SCALE GENOMIC DNA]</scope>
</reference>
<reference key="2">
    <citation type="journal article" date="1993" name="J. Gen. Virol.">
        <title>Nucleotide sequence of the ubiquitin-39K gene region from the Orgyia pseudotsugata multinucleocapsid nuclear polyhedrosis virus genome.</title>
        <authorList>
            <person name="Russell R.L.Q."/>
            <person name="Rohrmann G.F."/>
        </authorList>
    </citation>
    <scope>NUCLEOTIDE SEQUENCE [GENOMIC DNA] OF 30-209</scope>
</reference>
<proteinExistence type="predicted"/>
<gene>
    <name type="ORF">ORF22</name>
</gene>
<organism>
    <name type="scientific">Orgyia pseudotsugata multicapsid polyhedrosis virus</name>
    <name type="common">OpMNPV</name>
    <dbReference type="NCBI Taxonomy" id="262177"/>
    <lineage>
        <taxon>Viruses</taxon>
        <taxon>Viruses incertae sedis</taxon>
        <taxon>Naldaviricetes</taxon>
        <taxon>Lefavirales</taxon>
        <taxon>Baculoviridae</taxon>
        <taxon>Alphabaculovirus</taxon>
        <taxon>Alphabaculovirus orpseudotsugatae</taxon>
    </lineage>
</organism>
<accession>Q05125</accession>
<accession>O10283</accession>
<sequence length="209" mass="24254">MRNSAGLFMIMEPDRAVLLCARRAYHGGAVSDTFLEKISIPRGHRDCTDAKIYETAVREFVEETGRFFHSAYIYKFPFTLHWTDEGVTYKYSIYVGVVRGALADVKFKPNTYTVKLLPGANNDYRIVLRPRRFNCEISRSLTIVPLNQYFDYMTSKQLNTYASSNYGEFFDFVRQVKRLFDNKQLHDFFHASLQRVDPNDALACPGPQR</sequence>
<feature type="chain" id="PRO_0000132976" description="Uncharacterized 24.3 kDa protein">
    <location>
        <begin position="1"/>
        <end position="209"/>
    </location>
</feature>
<feature type="domain" description="Nudix hydrolase" evidence="1">
    <location>
        <begin position="1"/>
        <end position="167"/>
    </location>
</feature>
<feature type="sequence conflict" description="In Ref. 2; BAA02636." evidence="2" ref="2">
    <original>LE</original>
    <variation>R</variation>
    <location>
        <begin position="35"/>
        <end position="36"/>
    </location>
</feature>
<name>Y038_NPVOP</name>
<dbReference type="EMBL" id="U75930">
    <property type="protein sequence ID" value="AAC59021.1"/>
    <property type="molecule type" value="Genomic_DNA"/>
</dbReference>
<dbReference type="EMBL" id="D13375">
    <property type="protein sequence ID" value="BAA02636.1"/>
    <property type="molecule type" value="Genomic_DNA"/>
</dbReference>
<dbReference type="PIR" id="PQ0633">
    <property type="entry name" value="PQ0633"/>
</dbReference>
<dbReference type="RefSeq" id="NP_046178.1">
    <property type="nucleotide sequence ID" value="NC_001875.2"/>
</dbReference>
<dbReference type="SMR" id="Q05125"/>
<dbReference type="KEGG" id="vg:912001"/>
<dbReference type="OrthoDB" id="12499at10239"/>
<dbReference type="Proteomes" id="UP000009248">
    <property type="component" value="Genome"/>
</dbReference>
<dbReference type="Gene3D" id="3.90.79.10">
    <property type="entry name" value="Nucleoside Triphosphate Pyrophosphohydrolase"/>
    <property type="match status" value="1"/>
</dbReference>
<dbReference type="InterPro" id="IPR015797">
    <property type="entry name" value="NUDIX_hydrolase-like_dom_sf"/>
</dbReference>
<dbReference type="InterPro" id="IPR000086">
    <property type="entry name" value="NUDIX_hydrolase_dom"/>
</dbReference>
<dbReference type="Pfam" id="PF00293">
    <property type="entry name" value="NUDIX"/>
    <property type="match status" value="1"/>
</dbReference>
<dbReference type="SUPFAM" id="SSF55811">
    <property type="entry name" value="Nudix"/>
    <property type="match status" value="1"/>
</dbReference>
<dbReference type="PROSITE" id="PS51462">
    <property type="entry name" value="NUDIX"/>
    <property type="match status" value="1"/>
</dbReference>
<keyword id="KW-1185">Reference proteome</keyword>